<comment type="function">
    <text evidence="1">Catalyzes the synthesis of GMP from XMP.</text>
</comment>
<comment type="catalytic activity">
    <reaction evidence="1">
        <text>XMP + L-glutamine + ATP + H2O = GMP + L-glutamate + AMP + diphosphate + 2 H(+)</text>
        <dbReference type="Rhea" id="RHEA:11680"/>
        <dbReference type="ChEBI" id="CHEBI:15377"/>
        <dbReference type="ChEBI" id="CHEBI:15378"/>
        <dbReference type="ChEBI" id="CHEBI:29985"/>
        <dbReference type="ChEBI" id="CHEBI:30616"/>
        <dbReference type="ChEBI" id="CHEBI:33019"/>
        <dbReference type="ChEBI" id="CHEBI:57464"/>
        <dbReference type="ChEBI" id="CHEBI:58115"/>
        <dbReference type="ChEBI" id="CHEBI:58359"/>
        <dbReference type="ChEBI" id="CHEBI:456215"/>
        <dbReference type="EC" id="6.3.5.2"/>
    </reaction>
</comment>
<comment type="pathway">
    <text evidence="1">Purine metabolism; GMP biosynthesis; GMP from XMP (L-Gln route): step 1/1.</text>
</comment>
<comment type="subunit">
    <text evidence="1">Homodimer.</text>
</comment>
<evidence type="ECO:0000255" key="1">
    <source>
        <dbReference type="HAMAP-Rule" id="MF_00344"/>
    </source>
</evidence>
<protein>
    <recommendedName>
        <fullName evidence="1">GMP synthase [glutamine-hydrolyzing]</fullName>
        <ecNumber evidence="1">6.3.5.2</ecNumber>
    </recommendedName>
    <alternativeName>
        <fullName evidence="1">GMP synthetase</fullName>
    </alternativeName>
    <alternativeName>
        <fullName evidence="1">Glutamine amidotransferase</fullName>
    </alternativeName>
</protein>
<dbReference type="EC" id="6.3.5.2" evidence="1"/>
<dbReference type="EMBL" id="CP000260">
    <property type="protein sequence ID" value="ABF34098.1"/>
    <property type="molecule type" value="Genomic_DNA"/>
</dbReference>
<dbReference type="SMR" id="Q1JGP6"/>
<dbReference type="MEROPS" id="C26.957"/>
<dbReference type="KEGG" id="sph:MGAS10270_Spy1033"/>
<dbReference type="HOGENOM" id="CLU_014340_0_5_9"/>
<dbReference type="UniPathway" id="UPA00189">
    <property type="reaction ID" value="UER00296"/>
</dbReference>
<dbReference type="Proteomes" id="UP000002436">
    <property type="component" value="Chromosome"/>
</dbReference>
<dbReference type="GO" id="GO:0005829">
    <property type="term" value="C:cytosol"/>
    <property type="evidence" value="ECO:0007669"/>
    <property type="project" value="TreeGrafter"/>
</dbReference>
<dbReference type="GO" id="GO:0005524">
    <property type="term" value="F:ATP binding"/>
    <property type="evidence" value="ECO:0007669"/>
    <property type="project" value="UniProtKB-UniRule"/>
</dbReference>
<dbReference type="GO" id="GO:0003921">
    <property type="term" value="F:GMP synthase activity"/>
    <property type="evidence" value="ECO:0007669"/>
    <property type="project" value="InterPro"/>
</dbReference>
<dbReference type="CDD" id="cd01742">
    <property type="entry name" value="GATase1_GMP_Synthase"/>
    <property type="match status" value="1"/>
</dbReference>
<dbReference type="CDD" id="cd01997">
    <property type="entry name" value="GMP_synthase_C"/>
    <property type="match status" value="1"/>
</dbReference>
<dbReference type="FunFam" id="3.30.300.10:FF:000002">
    <property type="entry name" value="GMP synthase [glutamine-hydrolyzing]"/>
    <property type="match status" value="1"/>
</dbReference>
<dbReference type="FunFam" id="3.40.50.620:FF:000001">
    <property type="entry name" value="GMP synthase [glutamine-hydrolyzing]"/>
    <property type="match status" value="1"/>
</dbReference>
<dbReference type="FunFam" id="3.40.50.880:FF:000001">
    <property type="entry name" value="GMP synthase [glutamine-hydrolyzing]"/>
    <property type="match status" value="1"/>
</dbReference>
<dbReference type="Gene3D" id="3.30.300.10">
    <property type="match status" value="1"/>
</dbReference>
<dbReference type="Gene3D" id="3.40.50.880">
    <property type="match status" value="1"/>
</dbReference>
<dbReference type="Gene3D" id="3.40.50.620">
    <property type="entry name" value="HUPs"/>
    <property type="match status" value="1"/>
</dbReference>
<dbReference type="HAMAP" id="MF_00344">
    <property type="entry name" value="GMP_synthase"/>
    <property type="match status" value="1"/>
</dbReference>
<dbReference type="InterPro" id="IPR029062">
    <property type="entry name" value="Class_I_gatase-like"/>
</dbReference>
<dbReference type="InterPro" id="IPR017926">
    <property type="entry name" value="GATASE"/>
</dbReference>
<dbReference type="InterPro" id="IPR001674">
    <property type="entry name" value="GMP_synth_C"/>
</dbReference>
<dbReference type="InterPro" id="IPR004739">
    <property type="entry name" value="GMP_synth_GATase"/>
</dbReference>
<dbReference type="InterPro" id="IPR022955">
    <property type="entry name" value="GMP_synthase"/>
</dbReference>
<dbReference type="InterPro" id="IPR025777">
    <property type="entry name" value="GMPS_ATP_PPase_dom"/>
</dbReference>
<dbReference type="InterPro" id="IPR022310">
    <property type="entry name" value="NAD/GMP_synthase"/>
</dbReference>
<dbReference type="InterPro" id="IPR014729">
    <property type="entry name" value="Rossmann-like_a/b/a_fold"/>
</dbReference>
<dbReference type="NCBIfam" id="TIGR00884">
    <property type="entry name" value="guaA_Cterm"/>
    <property type="match status" value="1"/>
</dbReference>
<dbReference type="NCBIfam" id="TIGR00888">
    <property type="entry name" value="guaA_Nterm"/>
    <property type="match status" value="1"/>
</dbReference>
<dbReference type="NCBIfam" id="NF000848">
    <property type="entry name" value="PRK00074.1"/>
    <property type="match status" value="1"/>
</dbReference>
<dbReference type="PANTHER" id="PTHR11922:SF2">
    <property type="entry name" value="GMP SYNTHASE [GLUTAMINE-HYDROLYZING]"/>
    <property type="match status" value="1"/>
</dbReference>
<dbReference type="PANTHER" id="PTHR11922">
    <property type="entry name" value="GMP SYNTHASE-RELATED"/>
    <property type="match status" value="1"/>
</dbReference>
<dbReference type="Pfam" id="PF00117">
    <property type="entry name" value="GATase"/>
    <property type="match status" value="1"/>
</dbReference>
<dbReference type="Pfam" id="PF00958">
    <property type="entry name" value="GMP_synt_C"/>
    <property type="match status" value="1"/>
</dbReference>
<dbReference type="Pfam" id="PF02540">
    <property type="entry name" value="NAD_synthase"/>
    <property type="match status" value="1"/>
</dbReference>
<dbReference type="PRINTS" id="PR00097">
    <property type="entry name" value="ANTSNTHASEII"/>
</dbReference>
<dbReference type="PRINTS" id="PR00099">
    <property type="entry name" value="CPSGATASE"/>
</dbReference>
<dbReference type="PRINTS" id="PR00096">
    <property type="entry name" value="GATASE"/>
</dbReference>
<dbReference type="SUPFAM" id="SSF52402">
    <property type="entry name" value="Adenine nucleotide alpha hydrolases-like"/>
    <property type="match status" value="1"/>
</dbReference>
<dbReference type="SUPFAM" id="SSF52317">
    <property type="entry name" value="Class I glutamine amidotransferase-like"/>
    <property type="match status" value="1"/>
</dbReference>
<dbReference type="SUPFAM" id="SSF54810">
    <property type="entry name" value="GMP synthetase C-terminal dimerisation domain"/>
    <property type="match status" value="1"/>
</dbReference>
<dbReference type="PROSITE" id="PS51273">
    <property type="entry name" value="GATASE_TYPE_1"/>
    <property type="match status" value="1"/>
</dbReference>
<dbReference type="PROSITE" id="PS51553">
    <property type="entry name" value="GMPS_ATP_PPASE"/>
    <property type="match status" value="1"/>
</dbReference>
<organism>
    <name type="scientific">Streptococcus pyogenes serotype M2 (strain MGAS10270)</name>
    <dbReference type="NCBI Taxonomy" id="370552"/>
    <lineage>
        <taxon>Bacteria</taxon>
        <taxon>Bacillati</taxon>
        <taxon>Bacillota</taxon>
        <taxon>Bacilli</taxon>
        <taxon>Lactobacillales</taxon>
        <taxon>Streptococcaceae</taxon>
        <taxon>Streptococcus</taxon>
    </lineage>
</organism>
<feature type="chain" id="PRO_1000120432" description="GMP synthase [glutamine-hydrolyzing]">
    <location>
        <begin position="1"/>
        <end position="520"/>
    </location>
</feature>
<feature type="domain" description="Glutamine amidotransferase type-1" evidence="1">
    <location>
        <begin position="12"/>
        <end position="205"/>
    </location>
</feature>
<feature type="domain" description="GMPS ATP-PPase" evidence="1">
    <location>
        <begin position="206"/>
        <end position="395"/>
    </location>
</feature>
<feature type="active site" description="Nucleophile" evidence="1">
    <location>
        <position position="89"/>
    </location>
</feature>
<feature type="active site" evidence="1">
    <location>
        <position position="179"/>
    </location>
</feature>
<feature type="active site" evidence="1">
    <location>
        <position position="181"/>
    </location>
</feature>
<feature type="binding site" evidence="1">
    <location>
        <begin position="233"/>
        <end position="239"/>
    </location>
    <ligand>
        <name>ATP</name>
        <dbReference type="ChEBI" id="CHEBI:30616"/>
    </ligand>
</feature>
<accession>Q1JGP6</accession>
<keyword id="KW-0067">ATP-binding</keyword>
<keyword id="KW-0315">Glutamine amidotransferase</keyword>
<keyword id="KW-0332">GMP biosynthesis</keyword>
<keyword id="KW-0436">Ligase</keyword>
<keyword id="KW-0547">Nucleotide-binding</keyword>
<keyword id="KW-0658">Purine biosynthesis</keyword>
<reference key="1">
    <citation type="journal article" date="2006" name="Proc. Natl. Acad. Sci. U.S.A.">
        <title>Molecular genetic anatomy of inter- and intraserotype variation in the human bacterial pathogen group A Streptococcus.</title>
        <authorList>
            <person name="Beres S.B."/>
            <person name="Richter E.W."/>
            <person name="Nagiec M.J."/>
            <person name="Sumby P."/>
            <person name="Porcella S.F."/>
            <person name="DeLeo F.R."/>
            <person name="Musser J.M."/>
        </authorList>
    </citation>
    <scope>NUCLEOTIDE SEQUENCE [LARGE SCALE GENOMIC DNA]</scope>
    <source>
        <strain>MGAS10270</strain>
    </source>
</reference>
<proteinExistence type="inferred from homology"/>
<sequence length="520" mass="57479">MTEISILNDVQKIIVLDYGSQYNQLIARRIREFGVLSELKSHKITAQELHEINPIGIVLSGGPNSVYADNAFGIDPEIFELGIPILGICYGMQLITHKLGGKVVPAGQAGNREYGQSTLHLRETSKLFSGTPQEQLVLMSHGDAVTEIPEGFHLVGDSNDCPYAAIENTEKNLYGIQFHPEVRHSVYGNDILKNFAISICGARGDWSMDNFIDMEITKIRETVGDRKVLLGLSGGVDSSVVGVLLQKAIGDQLTCIFVDHGLLRKDEGDQVMGMLGGKFGLNIIRVDASKRFLDLLADVEDPEKKRKIIGNEFVYVFDDEASKLKGVDFLAQGTLYTDIIESGTETAQTIKSHHNVGGLPEDMQFELIEPLNTLFKDEVRALGIALGMPEEIVWRQPFPGPGLAIRVMGAITEEKLETVRESDAILREEIAKAGLDRDVWQYFTVNTGVRSVGVMGDGRTYDYTIAIRAITSIDGMTADFAQLPWDVLKKISTRIVNEVDHVNRIVYDITSKPPATVEWE</sequence>
<gene>
    <name evidence="1" type="primary">guaA</name>
    <name type="ordered locus">MGAS10270_Spy1033</name>
</gene>
<name>GUAA_STRPD</name>